<protein>
    <recommendedName>
        <fullName>Maltose-binding periplasmic protein</fullName>
    </recommendedName>
    <alternativeName>
        <fullName>MBP</fullName>
    </alternativeName>
    <alternativeName>
        <fullName>MMBP</fullName>
    </alternativeName>
    <alternativeName>
        <fullName>Maltodextrin-binding protein</fullName>
    </alternativeName>
</protein>
<keyword id="KW-0574">Periplasm</keyword>
<keyword id="KW-0762">Sugar transport</keyword>
<keyword id="KW-0813">Transport</keyword>
<feature type="chain" id="PRO_0000062774" description="Maltose-binding periplasmic protein">
    <location>
        <begin position="1" status="less than"/>
        <end position="10"/>
    </location>
</feature>
<feature type="non-terminal residue">
    <location>
        <position position="1"/>
    </location>
</feature>
<accession>Q05564</accession>
<evidence type="ECO:0000305" key="1"/>
<gene>
    <name type="primary">malE</name>
</gene>
<reference key="1">
    <citation type="journal article" date="1993" name="Mol. Microbiol.">
        <title>Bacterial interspersed mosaic elements (BIMEs) are present in the genome of Klebsiella.</title>
        <authorList>
            <person name="Bachellier S."/>
            <person name="Perrin D."/>
            <person name="Hofnung M."/>
            <person name="Gilson E."/>
        </authorList>
    </citation>
    <scope>NUCLEOTIDE SEQUENCE [GENOMIC DNA]</scope>
    <source>
        <strain>1033-5P14 / KAY2026</strain>
    </source>
</reference>
<dbReference type="EMBL" id="X68329">
    <property type="protein sequence ID" value="CAA48406.1"/>
    <property type="molecule type" value="Genomic_DNA"/>
</dbReference>
<dbReference type="GO" id="GO:0042597">
    <property type="term" value="C:periplasmic space"/>
    <property type="evidence" value="ECO:0007669"/>
    <property type="project" value="UniProtKB-SubCell"/>
</dbReference>
<sequence length="10" mass="1159">LKDAQSRITK</sequence>
<comment type="function">
    <text>Involved in the high-affinity maltose membrane transport system. Initial receptor for the active transport of and chemotaxis toward maltooligosaccharides.</text>
</comment>
<comment type="subcellular location">
    <subcellularLocation>
        <location>Periplasm</location>
    </subcellularLocation>
</comment>
<comment type="similarity">
    <text evidence="1">Belongs to the bacterial solute-binding protein 1 family.</text>
</comment>
<name>MALE_KLEPN</name>
<proteinExistence type="inferred from homology"/>
<organism>
    <name type="scientific">Klebsiella pneumoniae</name>
    <dbReference type="NCBI Taxonomy" id="573"/>
    <lineage>
        <taxon>Bacteria</taxon>
        <taxon>Pseudomonadati</taxon>
        <taxon>Pseudomonadota</taxon>
        <taxon>Gammaproteobacteria</taxon>
        <taxon>Enterobacterales</taxon>
        <taxon>Enterobacteriaceae</taxon>
        <taxon>Klebsiella/Raoultella group</taxon>
        <taxon>Klebsiella</taxon>
        <taxon>Klebsiella pneumoniae complex</taxon>
    </lineage>
</organism>